<evidence type="ECO:0000255" key="1"/>
<evidence type="ECO:0000255" key="2">
    <source>
        <dbReference type="PROSITE-ProRule" id="PRU00258"/>
    </source>
</evidence>
<evidence type="ECO:0000255" key="3">
    <source>
        <dbReference type="PROSITE-ProRule" id="PRU01348"/>
    </source>
</evidence>
<evidence type="ECO:0000255" key="4">
    <source>
        <dbReference type="PROSITE-ProRule" id="PRU01363"/>
    </source>
</evidence>
<evidence type="ECO:0000269" key="5">
    <source>
    </source>
</evidence>
<evidence type="ECO:0000303" key="6">
    <source>
    </source>
</evidence>
<evidence type="ECO:0000305" key="7">
    <source>
    </source>
</evidence>
<evidence type="ECO:0000305" key="8">
    <source>
    </source>
</evidence>
<proteinExistence type="evidence at transcript level"/>
<keyword id="KW-0511">Multifunctional enzyme</keyword>
<keyword id="KW-0596">Phosphopantetheine</keyword>
<keyword id="KW-0597">Phosphoprotein</keyword>
<keyword id="KW-0808">Transferase</keyword>
<protein>
    <recommendedName>
        <fullName evidence="6">Highly reducing polyketide synthase poxF</fullName>
        <shortName evidence="6">HR-PKS poxF</shortName>
        <ecNumber evidence="5">2.3.1.-</ecNumber>
    </recommendedName>
    <alternativeName>
        <fullName evidence="6">Oxaleimides biosynthesis cluster protein F</fullName>
    </alternativeName>
</protein>
<gene>
    <name evidence="6" type="primary">poxF</name>
</gene>
<feature type="chain" id="PRO_0000453752" description="Highly reducing polyketide synthase poxF">
    <location>
        <begin position="1"/>
        <end position="2527"/>
    </location>
</feature>
<feature type="domain" description="Ketosynthase family 3 (KS3)" evidence="3">
    <location>
        <begin position="20"/>
        <end position="445"/>
    </location>
</feature>
<feature type="domain" description="PKS/mFAS DH" evidence="4">
    <location>
        <begin position="951"/>
        <end position="1270"/>
    </location>
</feature>
<feature type="domain" description="Carrier" evidence="2">
    <location>
        <begin position="2445"/>
        <end position="2522"/>
    </location>
</feature>
<feature type="region of interest" description="Malonyl-CoA:ACP transacylase (MAT) domain" evidence="1">
    <location>
        <begin position="560"/>
        <end position="882"/>
    </location>
</feature>
<feature type="region of interest" description="Dehydratase (DH) domain" evidence="1">
    <location>
        <begin position="951"/>
        <end position="1243"/>
    </location>
</feature>
<feature type="region of interest" description="N-terminal hotdog fold" evidence="4">
    <location>
        <begin position="951"/>
        <end position="1086"/>
    </location>
</feature>
<feature type="region of interest" description="C-terminal hotdog fold" evidence="4">
    <location>
        <begin position="1108"/>
        <end position="1270"/>
    </location>
</feature>
<feature type="region of interest" description="Methyltransferase (CMet) domain" evidence="1">
    <location>
        <begin position="1406"/>
        <end position="1587"/>
    </location>
</feature>
<feature type="region of interest" description="Enoyl reductase (ER) (ER) domain" evidence="1">
    <location>
        <begin position="1823"/>
        <end position="2137"/>
    </location>
</feature>
<feature type="region of interest" description="Ketoreductase (KR) domain" evidence="1">
    <location>
        <begin position="2162"/>
        <end position="2339"/>
    </location>
</feature>
<feature type="active site" description="For beta-ketoacyl synthase activity" evidence="3">
    <location>
        <position position="193"/>
    </location>
</feature>
<feature type="active site" description="For beta-ketoacyl synthase activity" evidence="3">
    <location>
        <position position="328"/>
    </location>
</feature>
<feature type="active site" description="For beta-ketoacyl synthase activity" evidence="3">
    <location>
        <position position="368"/>
    </location>
</feature>
<feature type="active site" description="Proton acceptor; for dehydratase activity" evidence="4">
    <location>
        <position position="983"/>
    </location>
</feature>
<feature type="active site" description="Proton donor; for dehydratase activity" evidence="4">
    <location>
        <position position="1174"/>
    </location>
</feature>
<feature type="modified residue" description="O-(pantetheine 4'-phosphoryl)serine" evidence="2">
    <location>
        <position position="2482"/>
    </location>
</feature>
<organism>
    <name type="scientific">Penicillium oxalicum</name>
    <dbReference type="NCBI Taxonomy" id="69781"/>
    <lineage>
        <taxon>Eukaryota</taxon>
        <taxon>Fungi</taxon>
        <taxon>Dikarya</taxon>
        <taxon>Ascomycota</taxon>
        <taxon>Pezizomycotina</taxon>
        <taxon>Eurotiomycetes</taxon>
        <taxon>Eurotiomycetidae</taxon>
        <taxon>Eurotiales</taxon>
        <taxon>Aspergillaceae</taxon>
        <taxon>Penicillium</taxon>
    </lineage>
</organism>
<dbReference type="EC" id="2.3.1.-" evidence="5"/>
<dbReference type="EMBL" id="KY764295">
    <property type="protein sequence ID" value="ARF05980.1"/>
    <property type="molecule type" value="Genomic_DNA"/>
</dbReference>
<dbReference type="SMR" id="A0A1W5T1T1"/>
<dbReference type="GO" id="GO:0004312">
    <property type="term" value="F:fatty acid synthase activity"/>
    <property type="evidence" value="ECO:0007669"/>
    <property type="project" value="TreeGrafter"/>
</dbReference>
<dbReference type="GO" id="GO:0016491">
    <property type="term" value="F:oxidoreductase activity"/>
    <property type="evidence" value="ECO:0007669"/>
    <property type="project" value="InterPro"/>
</dbReference>
<dbReference type="GO" id="GO:0031177">
    <property type="term" value="F:phosphopantetheine binding"/>
    <property type="evidence" value="ECO:0007669"/>
    <property type="project" value="InterPro"/>
</dbReference>
<dbReference type="GO" id="GO:0006633">
    <property type="term" value="P:fatty acid biosynthetic process"/>
    <property type="evidence" value="ECO:0007669"/>
    <property type="project" value="TreeGrafter"/>
</dbReference>
<dbReference type="GO" id="GO:1901336">
    <property type="term" value="P:lactone biosynthetic process"/>
    <property type="evidence" value="ECO:0007669"/>
    <property type="project" value="UniProtKB-ARBA"/>
</dbReference>
<dbReference type="GO" id="GO:0030639">
    <property type="term" value="P:polyketide biosynthetic process"/>
    <property type="evidence" value="ECO:0007669"/>
    <property type="project" value="UniProtKB-ARBA"/>
</dbReference>
<dbReference type="CDD" id="cd05195">
    <property type="entry name" value="enoyl_red"/>
    <property type="match status" value="1"/>
</dbReference>
<dbReference type="CDD" id="cd00833">
    <property type="entry name" value="PKS"/>
    <property type="match status" value="1"/>
</dbReference>
<dbReference type="FunFam" id="3.40.50.720:FF:000209">
    <property type="entry name" value="Polyketide synthase Pks12"/>
    <property type="match status" value="1"/>
</dbReference>
<dbReference type="Gene3D" id="3.30.70.3290">
    <property type="match status" value="1"/>
</dbReference>
<dbReference type="Gene3D" id="3.40.47.10">
    <property type="match status" value="1"/>
</dbReference>
<dbReference type="Gene3D" id="1.10.1200.10">
    <property type="entry name" value="ACP-like"/>
    <property type="match status" value="1"/>
</dbReference>
<dbReference type="Gene3D" id="3.40.366.10">
    <property type="entry name" value="Malonyl-Coenzyme A Acyl Carrier Protein, domain 2"/>
    <property type="match status" value="1"/>
</dbReference>
<dbReference type="Gene3D" id="3.90.180.10">
    <property type="entry name" value="Medium-chain alcohol dehydrogenases, catalytic domain"/>
    <property type="match status" value="1"/>
</dbReference>
<dbReference type="Gene3D" id="3.40.50.720">
    <property type="entry name" value="NAD(P)-binding Rossmann-like Domain"/>
    <property type="match status" value="1"/>
</dbReference>
<dbReference type="Gene3D" id="3.10.129.110">
    <property type="entry name" value="Polyketide synthase dehydratase"/>
    <property type="match status" value="1"/>
</dbReference>
<dbReference type="Gene3D" id="3.40.50.150">
    <property type="entry name" value="Vaccinia Virus protein VP39"/>
    <property type="match status" value="1"/>
</dbReference>
<dbReference type="InterPro" id="IPR001227">
    <property type="entry name" value="Ac_transferase_dom_sf"/>
</dbReference>
<dbReference type="InterPro" id="IPR036736">
    <property type="entry name" value="ACP-like_sf"/>
</dbReference>
<dbReference type="InterPro" id="IPR014043">
    <property type="entry name" value="Acyl_transferase_dom"/>
</dbReference>
<dbReference type="InterPro" id="IPR016035">
    <property type="entry name" value="Acyl_Trfase/lysoPLipase"/>
</dbReference>
<dbReference type="InterPro" id="IPR011032">
    <property type="entry name" value="GroES-like_sf"/>
</dbReference>
<dbReference type="InterPro" id="IPR014031">
    <property type="entry name" value="Ketoacyl_synth_C"/>
</dbReference>
<dbReference type="InterPro" id="IPR014030">
    <property type="entry name" value="Ketoacyl_synth_N"/>
</dbReference>
<dbReference type="InterPro" id="IPR016036">
    <property type="entry name" value="Malonyl_transacylase_ACP-bd"/>
</dbReference>
<dbReference type="InterPro" id="IPR036291">
    <property type="entry name" value="NAD(P)-bd_dom_sf"/>
</dbReference>
<dbReference type="InterPro" id="IPR056501">
    <property type="entry name" value="NAD-bd_HRPKS_sdrA"/>
</dbReference>
<dbReference type="InterPro" id="IPR032821">
    <property type="entry name" value="PKS_assoc"/>
</dbReference>
<dbReference type="InterPro" id="IPR020841">
    <property type="entry name" value="PKS_Beta-ketoAc_synthase_dom"/>
</dbReference>
<dbReference type="InterPro" id="IPR042104">
    <property type="entry name" value="PKS_dehydratase_sf"/>
</dbReference>
<dbReference type="InterPro" id="IPR020807">
    <property type="entry name" value="PKS_DH"/>
</dbReference>
<dbReference type="InterPro" id="IPR049551">
    <property type="entry name" value="PKS_DH_C"/>
</dbReference>
<dbReference type="InterPro" id="IPR049552">
    <property type="entry name" value="PKS_DH_N"/>
</dbReference>
<dbReference type="InterPro" id="IPR020843">
    <property type="entry name" value="PKS_ER"/>
</dbReference>
<dbReference type="InterPro" id="IPR013968">
    <property type="entry name" value="PKS_KR"/>
</dbReference>
<dbReference type="InterPro" id="IPR049900">
    <property type="entry name" value="PKS_mFAS_DH"/>
</dbReference>
<dbReference type="InterPro" id="IPR050091">
    <property type="entry name" value="PKS_NRPS_Biosynth_Enz"/>
</dbReference>
<dbReference type="InterPro" id="IPR020806">
    <property type="entry name" value="PKS_PP-bd"/>
</dbReference>
<dbReference type="InterPro" id="IPR009081">
    <property type="entry name" value="PP-bd_ACP"/>
</dbReference>
<dbReference type="InterPro" id="IPR029063">
    <property type="entry name" value="SAM-dependent_MTases_sf"/>
</dbReference>
<dbReference type="InterPro" id="IPR016039">
    <property type="entry name" value="Thiolase-like"/>
</dbReference>
<dbReference type="PANTHER" id="PTHR43775:SF29">
    <property type="entry name" value="ASPERFURANONE POLYKETIDE SYNTHASE AFOG-RELATED"/>
    <property type="match status" value="1"/>
</dbReference>
<dbReference type="PANTHER" id="PTHR43775">
    <property type="entry name" value="FATTY ACID SYNTHASE"/>
    <property type="match status" value="1"/>
</dbReference>
<dbReference type="Pfam" id="PF23297">
    <property type="entry name" value="ACP_SdgA_C"/>
    <property type="match status" value="1"/>
</dbReference>
<dbReference type="Pfam" id="PF00698">
    <property type="entry name" value="Acyl_transf_1"/>
    <property type="match status" value="1"/>
</dbReference>
<dbReference type="Pfam" id="PF13602">
    <property type="entry name" value="ADH_zinc_N_2"/>
    <property type="match status" value="1"/>
</dbReference>
<dbReference type="Pfam" id="PF16197">
    <property type="entry name" value="KAsynt_C_assoc"/>
    <property type="match status" value="1"/>
</dbReference>
<dbReference type="Pfam" id="PF00109">
    <property type="entry name" value="ketoacyl-synt"/>
    <property type="match status" value="1"/>
</dbReference>
<dbReference type="Pfam" id="PF02801">
    <property type="entry name" value="Ketoacyl-synt_C"/>
    <property type="match status" value="1"/>
</dbReference>
<dbReference type="Pfam" id="PF08659">
    <property type="entry name" value="KR"/>
    <property type="match status" value="1"/>
</dbReference>
<dbReference type="Pfam" id="PF23114">
    <property type="entry name" value="NAD-bd_HRPKS_sdrA"/>
    <property type="match status" value="1"/>
</dbReference>
<dbReference type="Pfam" id="PF21089">
    <property type="entry name" value="PKS_DH_N"/>
    <property type="match status" value="1"/>
</dbReference>
<dbReference type="Pfam" id="PF14765">
    <property type="entry name" value="PS-DH"/>
    <property type="match status" value="1"/>
</dbReference>
<dbReference type="SMART" id="SM00827">
    <property type="entry name" value="PKS_AT"/>
    <property type="match status" value="1"/>
</dbReference>
<dbReference type="SMART" id="SM00826">
    <property type="entry name" value="PKS_DH"/>
    <property type="match status" value="1"/>
</dbReference>
<dbReference type="SMART" id="SM00829">
    <property type="entry name" value="PKS_ER"/>
    <property type="match status" value="1"/>
</dbReference>
<dbReference type="SMART" id="SM00822">
    <property type="entry name" value="PKS_KR"/>
    <property type="match status" value="1"/>
</dbReference>
<dbReference type="SMART" id="SM00825">
    <property type="entry name" value="PKS_KS"/>
    <property type="match status" value="1"/>
</dbReference>
<dbReference type="SMART" id="SM00823">
    <property type="entry name" value="PKS_PP"/>
    <property type="match status" value="1"/>
</dbReference>
<dbReference type="SUPFAM" id="SSF47336">
    <property type="entry name" value="ACP-like"/>
    <property type="match status" value="1"/>
</dbReference>
<dbReference type="SUPFAM" id="SSF52151">
    <property type="entry name" value="FabD/lysophospholipase-like"/>
    <property type="match status" value="1"/>
</dbReference>
<dbReference type="SUPFAM" id="SSF50129">
    <property type="entry name" value="GroES-like"/>
    <property type="match status" value="1"/>
</dbReference>
<dbReference type="SUPFAM" id="SSF51735">
    <property type="entry name" value="NAD(P)-binding Rossmann-fold domains"/>
    <property type="match status" value="2"/>
</dbReference>
<dbReference type="SUPFAM" id="SSF55048">
    <property type="entry name" value="Probable ACP-binding domain of malonyl-CoA ACP transacylase"/>
    <property type="match status" value="1"/>
</dbReference>
<dbReference type="SUPFAM" id="SSF53335">
    <property type="entry name" value="S-adenosyl-L-methionine-dependent methyltransferases"/>
    <property type="match status" value="1"/>
</dbReference>
<dbReference type="SUPFAM" id="SSF53901">
    <property type="entry name" value="Thiolase-like"/>
    <property type="match status" value="1"/>
</dbReference>
<dbReference type="PROSITE" id="PS50075">
    <property type="entry name" value="CARRIER"/>
    <property type="match status" value="1"/>
</dbReference>
<dbReference type="PROSITE" id="PS52004">
    <property type="entry name" value="KS3_2"/>
    <property type="match status" value="1"/>
</dbReference>
<dbReference type="PROSITE" id="PS52019">
    <property type="entry name" value="PKS_MFAS_DH"/>
    <property type="match status" value="1"/>
</dbReference>
<name>POXF_PENOX</name>
<sequence>MIAPVNAGDTDASEPGDLGVMPIAIIGMACRFPGDASNPEKLWNLCAKGKSAWSPIPESRFHAESWYHPDKGHLGTSYVKGAHFLTEDISRFDAAFFNCTAESASTMDPEVRMQLETVYEALESAGLPLDQVAGSRTGVYAGTCFRDNHDSLMRDPDTLARFFLTGNGAAMIANRISHFFDLRGPSLMVDTGCSTTLTLLHLACQSVRAGESEMAIVGGSNVLLNPDMFIAGSNLSLLSEAGRCFAFDSRAAGYGRGDGIASIVIKPLAAALRDGDPVRAVIRNSAANQDGKTATLTSPSQDAQEELMRECYDMAGLDPRDTSYVEAHGTGTQVGDTIEAHAIGHVFGAGRSSESPLVIGSVKTNIGHTEAASGLAGVIKVVMAMEKRAIPPHMNFESPNEKISLEGLKLKIPLSLQEWPSPLLQRASINNFGYGGANAHVIVESPQSMLLPLTPSSSEMGNTPNPKKRSRVFLLSAKDPAAARSMGENLYDYVATTLENSRENEEQILDQLAFTLGQRRTRFAWTTAWSGSSLADVHARLGSARSTAERSTRAPRVGMVFTGQGAQWFAMGRELFSAYPVFYDTMHEIDACLKNMGATWSAVEELQRDAKESRINQVTFSLPLSVAIQLALVDLLRSWGIRPAGVTGHSSGEVGAAYAAGAITLAGAMAIVYTRGDLTSQFQKLLDRRGGMVAVGLGREEAEKALAEVQSGTAVIACVNSPSSVTISGDECAVEEVEAMLTARGVFARRLRVEAAYHSHHMLPLAEAYRVLLSRFLEPNTEFDSTVVYSSPTTGDRMTSAADIAHPDHWVRNMVQPVEFLNSLRNLCSGAAPARTSTSTAVDMLVEVGPHGALAGPIRQTLALPELKDAGITYASCLSRGQDAVQTIHQLICTLLQAGYPVDLEAVNFPYGRSDVQVLTNLPPYPWNHETSYWAEPRRNKELRARTVAPHDLLGVPAAGSTPTTPAWRHVVRPRDIPWVRDHIVQGAIVYPGAGYVSMVVEALRQLQTPDNPSHGYQLQDVQIRNPLILEDTAEGVDVQLSLHPCGDRVRHAQGWYEFLIQSVNQTGDLWTLHCEGLCCTPSPAQGTGWAGPPAPVNAPSFTVPASAWRILNPADTYKTLHEVGVCHGPIFQNLMSAQSAPGHSQSVFQVADSAATMPQGYQQSHVIHPITLDAVFQAVYHNLPAGGTQQRTAMIPTSIQNLYISAKLITSPGHQFRADSTLMKISGQGFESSVRVINNAGTDEANEPPTPVLTLDGLFCQSLGSSAVVLTPDDKLCYTSVWAPDFDFLQPEHLLRKAEGAHQHSFSELQAAAVVFINDALQEFENEQVVAAEHQSYWDWMKGVVDQARPTLDLAGVTAQYMAALTEDLKQGVDGRLLCRFGERLPEILSGLVPAKEILRDFLVEDQAEWSSVSEYLEPFMSSLMKLHGHKRPRATVLEIGTGNVASTRMFAKALTRNDTQLFARYDVTAPSTGLVEVASKALRDDTRAECKVLDLDTPAGDQGFTRASYDLLILSASALLAAEDVVQSLTSLRALLAPGGKCILWGPTLGDSALQTIVRLLPRWSGVINATPTWQRLLAKAGFEPSNFQLEEGLNSSGYQGEVVIATAKADTTIYSAVKVVLVSGTSPPEEWQQTLQHSLPADVVSGISVVSSLEDVDVEDKVCLILEEFVQPILENPSEEQFYDLQRVLGSSRATVWVSRGAQGDAEDPRGSLHQGLLRTLRCENILRQYVSVDLDPNAPVWSSSSATQIAWILSNMLITSSFHLPETEYAIRNSVVQISRVYGDEQEAQLVGTTKPQNPELRPWSTPGQNIRLGVATPGLLNSLVFTEDPTIEETLPDDWVEIEPRAFGLNFRDIMVALGQLDETRMGFECSGVITRVGQSAQAAGFCPGQGVYAFIIGYFATKVRIPFTSVASIPAGMDFATAASIPLVFITAYHALVDLARLQRDETVLIHSGTGGVGQAAIMLAQSIGADIFVTVGSEDKREFLMRQYGIPSSRIFSSRNPSFAQHIMSETDGKGVDVVLNSLAGPLLRETWRCVGMFGRFIEIGKRDIEQNSMVEMGPFVRSTLFASLDLITLGEQRGKEVQRIFAAINELLADGEIRPVGPITRFGIGEVEKAFRTMQTGKHMGKIVLEPRPGDQVRVLTAGPRPAELSPDDTYLLVGGVGGIGKSLCQLLVDRGARNLLVLSRNAARITPETQQWLDVLQATGARVVLESCDVTQRAQLQAVFEKYSSELPPIRGVIQAAMVLKDGIFESMTHEDYLAALKPKVQGTFNLHTLLPTDLRFFILLSSISGFGGNAGQANYAAGGSYQDALARHRAGRGLPAVSIDLGMVSSVGVVAGTQHVADHLEKLGLRAVSEQEVWALVESAIRHPIRTPETCHIVTGLPGGFVRSDSPVCWNRDARFAILEQKDFSSSGLASTSNPGAGLKERLSAVTTPAEVTTLIQSALITKLAEMFSRSPEEIDPSLPLAHFGVDSLVAVELRNWSVATVQADCSIFDVMHAVSVTGLAGQMAKKSRFVKL</sequence>
<accession>A0A1W5T1T1</accession>
<comment type="function">
    <text evidence="5 8">Highly reducing polyketide synthase; part of the gene cluster that mediates the biosynthesis of oxaleimides, cytotoxic compounds containing an unusual disubstituted succinimide moiety (PubMed:28365998). The first step of the pathway is provided by the HR-PKS poxF that serves in a new mode of collaborative biosynthesis with the PKS-NRPS poxE, by providing the olefin containing amino acid substrate via the synthesis of an ACP-bound dec-4-enoate (PubMed:28365998). The cytochrome P450 monooxygenase poxM-catalyzed oxidation at the alpha-position creates the enzyme-bound 2-hydroxydec-4-enoyl-ACP thioester, which may be prone to spontaneous hydrolysis to yield 2-hydroxydec-4-enoic acid due to increased electrophilicity of the carbonyl (PubMed:28365998). 2-hydroxydec-4-enoic acid can then be further oxidized by poxM to yield the alpha-ketoacid 2-oxodec-4-enoicacid, which is reductively aminated by the aminotransferase poxL to yield (S,E)-2-aminodec-4-enoic acid (PubMed:28365998). The Hybrid PKS-NRPS synthetase poxE then performs condensation between the octaketide product of its PKS modules and the amino group of (S,E)-2-aminodec-4-enoic acid which is activated and incorporated by the adenylation domain (PubMed:28365998). The resulting aminoacyl product can be cyclized by the Diels-Alderase PoxQ and reductively released by the reductive (R) domain of poxE to yield an aldehyde intermediate (Probable) (PubMed:28365998). The released aldehyde is then substrate for a Knoevenagel condensation by the hydrolyase poxO followed by an oxidation at the 5-position of the pyrrolidone ring (PubMed:28365998). The presence of the olefin from the amino acid building block allows for migration of the substituted allyl group to occur (PubMed:28365998). This allylic transposition reaction takes place in a conjugate addition, semipinacol-like fashion to yield a succinimide intermediate (PubMed:28365998). Iterative two-electron oxidations of the C7 methyl of the succinimide intermediate to the carboxylic acid can be catalyzed by one of two remaining cytochrome P450 monooxygenasess poxC or poxD to yield oxaleimide A (PubMed:28365998). Subsequent oxidation yields the maleimide scaffold oxaleimide I (PubMed:28365998). Both oxaleimide A and oxaleimide I can undergo oxidative modifications in the decalin ring to yield the series of products oxaleimides B to H (PubMed:28365998).</text>
</comment>
<comment type="pathway">
    <text evidence="5">Secondary metabolite biosynthesis.</text>
</comment>
<comment type="induction">
    <text evidence="5">Expression is positively regulated by the oxaleimides biosynthesis cluster-specific transcription factor poxB.</text>
</comment>
<comment type="domain">
    <text evidence="7">Multidomain protein; including a ketosynthase (KS) that catalyzes repeated decarboxylative condensation to elongate the polyketide backbone; a malonyl-CoA:ACP transacylase (MAT) that selects and transfers the extender unit malonyl-CoA; a dehydratase (DH) domain that reduces hydroxyl groups to enoyl groups; a methyltransferase (CMeT) domain responsible for the incorporation of methyl groups; an enoylreductase (ER) domain that reduces enoyl groups to alkyl group; a ketoreductase (KR) domain that catalyzes beta-ketoreduction steps; and an acyl-carrier protein (ACP) that serves as the tether of the growing and completed polyketide via its phosphopantetheinyl arm.</text>
</comment>
<comment type="disruption phenotype">
    <text evidence="5">Impairs the productin of oxaleimides.</text>
</comment>
<reference key="1">
    <citation type="journal article" date="2017" name="J. Am. Chem. Soc.">
        <title>Collaborative Biosynthesis of Maleimide- and Succinimide-Containing Natural Products by Fungal Polyketide Megasynthases.</title>
        <authorList>
            <person name="Sato M."/>
            <person name="Dander J.E."/>
            <person name="Sato C."/>
            <person name="Hung Y.S."/>
            <person name="Gao S.S."/>
            <person name="Tang M.C."/>
            <person name="Hang L."/>
            <person name="Winter J.M."/>
            <person name="Garg N.K."/>
            <person name="Watanabe K."/>
            <person name="Tang Y."/>
        </authorList>
    </citation>
    <scope>NUCLEOTIDE SEQUENCE [GENOMIC DNA]</scope>
    <scope>FUNCTION</scope>
    <scope>DISRUPTION PHENOTYPE</scope>
    <scope>INDUCTION</scope>
    <scope>PATHWAY</scope>
    <source>
        <strain>K85</strain>
    </source>
</reference>
<reference key="2">
    <citation type="journal article" date="2020" name="Chem. Commun. (Camb.)">
        <title>Evidence for enzyme catalysed intramolecular [4+2] Diels-Alder cyclization during the biosynthesis of pyrichalasin H.</title>
        <authorList>
            <person name="Hantke V."/>
            <person name="Skellam E.J."/>
            <person name="Cox R.J."/>
        </authorList>
    </citation>
    <scope>FUNCTION</scope>
</reference>